<name>METE_VIBHA</name>
<dbReference type="EC" id="2.1.1.14" evidence="1"/>
<dbReference type="EMBL" id="AF535154">
    <property type="protein sequence ID" value="AAN04098.1"/>
    <property type="molecule type" value="Genomic_DNA"/>
</dbReference>
<dbReference type="RefSeq" id="WP_038898631.1">
    <property type="nucleotide sequence ID" value="NZ_CANMKW010000008.1"/>
</dbReference>
<dbReference type="SMR" id="Q8KRG6"/>
<dbReference type="STRING" id="669.AL538_03440"/>
<dbReference type="PATRIC" id="fig|669.65.peg.2305"/>
<dbReference type="UniPathway" id="UPA00051">
    <property type="reaction ID" value="UER00082"/>
</dbReference>
<dbReference type="GO" id="GO:0003871">
    <property type="term" value="F:5-methyltetrahydropteroyltriglutamate-homocysteine S-methyltransferase activity"/>
    <property type="evidence" value="ECO:0007669"/>
    <property type="project" value="UniProtKB-UniRule"/>
</dbReference>
<dbReference type="GO" id="GO:0008270">
    <property type="term" value="F:zinc ion binding"/>
    <property type="evidence" value="ECO:0007669"/>
    <property type="project" value="InterPro"/>
</dbReference>
<dbReference type="GO" id="GO:0009086">
    <property type="term" value="P:methionine biosynthetic process"/>
    <property type="evidence" value="ECO:0007669"/>
    <property type="project" value="UniProtKB-UniRule"/>
</dbReference>
<dbReference type="GO" id="GO:0032259">
    <property type="term" value="P:methylation"/>
    <property type="evidence" value="ECO:0007669"/>
    <property type="project" value="UniProtKB-KW"/>
</dbReference>
<dbReference type="CDD" id="cd03311">
    <property type="entry name" value="CIMS_C_terminal_like"/>
    <property type="match status" value="1"/>
</dbReference>
<dbReference type="CDD" id="cd03312">
    <property type="entry name" value="CIMS_N_terminal_like"/>
    <property type="match status" value="1"/>
</dbReference>
<dbReference type="FunFam" id="3.20.20.210:FF:000002">
    <property type="entry name" value="5-methyltetrahydropteroyltriglutamate--homocysteine methyltransferase"/>
    <property type="match status" value="1"/>
</dbReference>
<dbReference type="FunFam" id="3.20.20.210:FF:000003">
    <property type="entry name" value="5-methyltetrahydropteroyltriglutamate--homocysteine methyltransferase"/>
    <property type="match status" value="1"/>
</dbReference>
<dbReference type="Gene3D" id="3.20.20.210">
    <property type="match status" value="2"/>
</dbReference>
<dbReference type="HAMAP" id="MF_00172">
    <property type="entry name" value="Meth_synth"/>
    <property type="match status" value="1"/>
</dbReference>
<dbReference type="InterPro" id="IPR013215">
    <property type="entry name" value="Cbl-indep_Met_Synth_N"/>
</dbReference>
<dbReference type="InterPro" id="IPR006276">
    <property type="entry name" value="Cobalamin-indep_Met_synthase"/>
</dbReference>
<dbReference type="InterPro" id="IPR002629">
    <property type="entry name" value="Met_Synth_C/arc"/>
</dbReference>
<dbReference type="InterPro" id="IPR038071">
    <property type="entry name" value="UROD/MetE-like_sf"/>
</dbReference>
<dbReference type="NCBIfam" id="TIGR01371">
    <property type="entry name" value="met_syn_B12ind"/>
    <property type="match status" value="1"/>
</dbReference>
<dbReference type="NCBIfam" id="NF003556">
    <property type="entry name" value="PRK05222.1"/>
    <property type="match status" value="1"/>
</dbReference>
<dbReference type="PANTHER" id="PTHR30519">
    <property type="entry name" value="5-METHYLTETRAHYDROPTEROYLTRIGLUTAMATE--HOMOCYSTEINE METHYLTRANSFERASE"/>
    <property type="match status" value="1"/>
</dbReference>
<dbReference type="Pfam" id="PF08267">
    <property type="entry name" value="Meth_synt_1"/>
    <property type="match status" value="1"/>
</dbReference>
<dbReference type="Pfam" id="PF01717">
    <property type="entry name" value="Meth_synt_2"/>
    <property type="match status" value="1"/>
</dbReference>
<dbReference type="PIRSF" id="PIRSF000382">
    <property type="entry name" value="MeTrfase_B12_ind"/>
    <property type="match status" value="1"/>
</dbReference>
<dbReference type="SUPFAM" id="SSF51726">
    <property type="entry name" value="UROD/MetE-like"/>
    <property type="match status" value="2"/>
</dbReference>
<gene>
    <name evidence="1" type="primary">metE</name>
</gene>
<accession>Q8KRG6</accession>
<organism>
    <name type="scientific">Vibrio harveyi</name>
    <name type="common">Beneckea harveyi</name>
    <dbReference type="NCBI Taxonomy" id="669"/>
    <lineage>
        <taxon>Bacteria</taxon>
        <taxon>Pseudomonadati</taxon>
        <taxon>Pseudomonadota</taxon>
        <taxon>Gammaproteobacteria</taxon>
        <taxon>Vibrionales</taxon>
        <taxon>Vibrionaceae</taxon>
        <taxon>Vibrio</taxon>
    </lineage>
</organism>
<comment type="function">
    <text evidence="1">Catalyzes the transfer of a methyl group from 5-methyltetrahydrofolate to homocysteine resulting in methionine formation.</text>
</comment>
<comment type="catalytic activity">
    <reaction evidence="1">
        <text>5-methyltetrahydropteroyltri-L-glutamate + L-homocysteine = tetrahydropteroyltri-L-glutamate + L-methionine</text>
        <dbReference type="Rhea" id="RHEA:21196"/>
        <dbReference type="ChEBI" id="CHEBI:57844"/>
        <dbReference type="ChEBI" id="CHEBI:58140"/>
        <dbReference type="ChEBI" id="CHEBI:58199"/>
        <dbReference type="ChEBI" id="CHEBI:58207"/>
        <dbReference type="EC" id="2.1.1.14"/>
    </reaction>
</comment>
<comment type="cofactor">
    <cofactor evidence="1">
        <name>Zn(2+)</name>
        <dbReference type="ChEBI" id="CHEBI:29105"/>
    </cofactor>
    <text evidence="1">Binds 1 zinc ion per subunit.</text>
</comment>
<comment type="pathway">
    <text evidence="1">Amino-acid biosynthesis; L-methionine biosynthesis via de novo pathway; L-methionine from L-homocysteine (MetE route): step 1/1.</text>
</comment>
<comment type="similarity">
    <text evidence="1">Belongs to the vitamin-B12 independent methionine synthase family.</text>
</comment>
<proteinExistence type="inferred from homology"/>
<protein>
    <recommendedName>
        <fullName evidence="1">5-methyltetrahydropteroyltriglutamate--homocysteine methyltransferase</fullName>
        <ecNumber evidence="1">2.1.1.14</ecNumber>
    </recommendedName>
    <alternativeName>
        <fullName evidence="1">Cobalamin-independent methionine synthase</fullName>
    </alternativeName>
    <alternativeName>
        <fullName evidence="1">Methionine synthase, vitamin-B12 independent isozyme</fullName>
    </alternativeName>
</protein>
<reference key="1">
    <citation type="journal article" date="2002" name="Mol. Microbiol.">
        <title>MetR and CRP bind to the Vibrio harveyi lux promoters and regulate luminescence.</title>
        <authorList>
            <person name="Chatterjee J."/>
            <person name="Miyamoto C.M."/>
            <person name="Zouzoulas A."/>
            <person name="Lang B.F."/>
            <person name="Skouris N."/>
            <person name="Meighen E.A."/>
        </authorList>
    </citation>
    <scope>NUCLEOTIDE SEQUENCE [GENOMIC DNA]</scope>
</reference>
<keyword id="KW-0028">Amino-acid biosynthesis</keyword>
<keyword id="KW-0479">Metal-binding</keyword>
<keyword id="KW-0486">Methionine biosynthesis</keyword>
<keyword id="KW-0489">Methyltransferase</keyword>
<keyword id="KW-0677">Repeat</keyword>
<keyword id="KW-0808">Transferase</keyword>
<keyword id="KW-0862">Zinc</keyword>
<feature type="chain" id="PRO_0000098676" description="5-methyltetrahydropteroyltriglutamate--homocysteine methyltransferase">
    <location>
        <begin position="1"/>
        <end position="760"/>
    </location>
</feature>
<feature type="active site" description="Proton donor" evidence="1">
    <location>
        <position position="699"/>
    </location>
</feature>
<feature type="binding site" evidence="1">
    <location>
        <begin position="17"/>
        <end position="20"/>
    </location>
    <ligand>
        <name>5-methyltetrahydropteroyltri-L-glutamate</name>
        <dbReference type="ChEBI" id="CHEBI:58207"/>
    </ligand>
</feature>
<feature type="binding site" evidence="1">
    <location>
        <position position="118"/>
    </location>
    <ligand>
        <name>5-methyltetrahydropteroyltri-L-glutamate</name>
        <dbReference type="ChEBI" id="CHEBI:58207"/>
    </ligand>
</feature>
<feature type="binding site" evidence="1">
    <location>
        <begin position="436"/>
        <end position="438"/>
    </location>
    <ligand>
        <name>L-homocysteine</name>
        <dbReference type="ChEBI" id="CHEBI:58199"/>
    </ligand>
</feature>
<feature type="binding site" evidence="1">
    <location>
        <begin position="436"/>
        <end position="438"/>
    </location>
    <ligand>
        <name>L-methionine</name>
        <dbReference type="ChEBI" id="CHEBI:57844"/>
    </ligand>
</feature>
<feature type="binding site" evidence="1">
    <location>
        <position position="489"/>
    </location>
    <ligand>
        <name>L-homocysteine</name>
        <dbReference type="ChEBI" id="CHEBI:58199"/>
    </ligand>
</feature>
<feature type="binding site" evidence="1">
    <location>
        <position position="489"/>
    </location>
    <ligand>
        <name>L-methionine</name>
        <dbReference type="ChEBI" id="CHEBI:57844"/>
    </ligand>
</feature>
<feature type="binding site" evidence="1">
    <location>
        <begin position="520"/>
        <end position="521"/>
    </location>
    <ligand>
        <name>5-methyltetrahydropteroyltri-L-glutamate</name>
        <dbReference type="ChEBI" id="CHEBI:58207"/>
    </ligand>
</feature>
<feature type="binding site" evidence="1">
    <location>
        <position position="566"/>
    </location>
    <ligand>
        <name>5-methyltetrahydropteroyltri-L-glutamate</name>
        <dbReference type="ChEBI" id="CHEBI:58207"/>
    </ligand>
</feature>
<feature type="binding site" evidence="1">
    <location>
        <position position="604"/>
    </location>
    <ligand>
        <name>L-homocysteine</name>
        <dbReference type="ChEBI" id="CHEBI:58199"/>
    </ligand>
</feature>
<feature type="binding site" evidence="1">
    <location>
        <position position="604"/>
    </location>
    <ligand>
        <name>L-methionine</name>
        <dbReference type="ChEBI" id="CHEBI:57844"/>
    </ligand>
</feature>
<feature type="binding site" evidence="1">
    <location>
        <position position="610"/>
    </location>
    <ligand>
        <name>5-methyltetrahydropteroyltri-L-glutamate</name>
        <dbReference type="ChEBI" id="CHEBI:58207"/>
    </ligand>
</feature>
<feature type="binding site" evidence="1">
    <location>
        <position position="646"/>
    </location>
    <ligand>
        <name>Zn(2+)</name>
        <dbReference type="ChEBI" id="CHEBI:29105"/>
        <note>catalytic</note>
    </ligand>
</feature>
<feature type="binding site" evidence="1">
    <location>
        <position position="648"/>
    </location>
    <ligand>
        <name>Zn(2+)</name>
        <dbReference type="ChEBI" id="CHEBI:29105"/>
        <note>catalytic</note>
    </ligand>
</feature>
<feature type="binding site" evidence="1">
    <location>
        <position position="670"/>
    </location>
    <ligand>
        <name>Zn(2+)</name>
        <dbReference type="ChEBI" id="CHEBI:29105"/>
        <note>catalytic</note>
    </ligand>
</feature>
<feature type="binding site" evidence="1">
    <location>
        <position position="731"/>
    </location>
    <ligand>
        <name>Zn(2+)</name>
        <dbReference type="ChEBI" id="CHEBI:29105"/>
        <note>catalytic</note>
    </ligand>
</feature>
<evidence type="ECO:0000255" key="1">
    <source>
        <dbReference type="HAMAP-Rule" id="MF_00172"/>
    </source>
</evidence>
<sequence>MTTTTHILGYPRIGEKRELKFAQEKYWRGEIEQTELKQVGATLREKNWATQAEAGLSFATAGDFAWYDHVLTTTLLLGHTPKRHANGFPDLDTLFKVGRGQSQAGCGCSGAAASDMTKWFNTNYHYIVPEFSKDDSFEVSWPQLFEEVNDAIKLGHNVKPVLLGPLSYLYLGKEIEEDFDRLTLLPRLLTAYQAILSKLANQGVEWVQIDEPILSLELEEKWGDAFKLAYQVIRSDVKVLLTTYFDSVSDTLDKIVELPVDGLHIDLSASPEQLDEVVEKLPQGWVLSAGVVNGRNVWRSDLSAQRERLQPVKDKLGDNLWVASSCSLLHSPVDLDLEPALSDEVKSWFAFAKQKVTEVALLGRALDGDHNAILVCDTYSQPIKDRKTAAHVNKPHVQARLNSISASLTERSAPYAERAAHQAEVLGLPLLPTTTIGSFPQTSEIRVQRSAFRSGQLSTDDYHQALKGHIADAVRRQEALDLDVLVHGEAERNDMVEYFAENLAGFQTTKFGWVQSYGSRCVKPAIVVADIEREKPITVEWSTYAQSLTNKQMKGMLTGPVTILCWTFPREDITRKAIADQLALALRDEVSDLQQAGINIIQIDEPAIREGLPLKKRDHKAYLQWAVDAFKIAAASAKPETQIHTHMCYSEFNEIIDSVAALDADVITIETSRSNMELLKAFEDFNYPNEIGPGVYDIHSPNIPSEEWIEELIKKAAEKIPAQRLWVNPDCGLKTRNWSETEAALANLVSAAKKLRAELV</sequence>